<gene>
    <name type="primary">MT-CYB</name>
    <name type="synonym">COB</name>
    <name type="synonym">CYTB</name>
    <name type="synonym">MTCYB</name>
</gene>
<comment type="function">
    <text evidence="2">Component of the ubiquinol-cytochrome c reductase complex (complex III or cytochrome b-c1 complex) that is part of the mitochondrial respiratory chain. The b-c1 complex mediates electron transfer from ubiquinol to cytochrome c. Contributes to the generation of a proton gradient across the mitochondrial membrane that is then used for ATP synthesis.</text>
</comment>
<comment type="cofactor">
    <cofactor evidence="2">
        <name>heme b</name>
        <dbReference type="ChEBI" id="CHEBI:60344"/>
    </cofactor>
    <text evidence="2">Binds 2 heme b groups non-covalently.</text>
</comment>
<comment type="subunit">
    <text evidence="2">The cytochrome bc1 complex contains 11 subunits: 3 respiratory subunits (MT-CYB, CYC1 and UQCRFS1), 2 core proteins (UQCRC1 and UQCRC2) and 6 low-molecular weight proteins (UQCRH/QCR6, UQCRB/QCR7, UQCRQ/QCR8, UQCR10/QCR9, UQCR11/QCR10 and a cleavage product of UQCRFS1). This cytochrome bc1 complex then forms a dimer.</text>
</comment>
<comment type="subcellular location">
    <subcellularLocation>
        <location evidence="2">Mitochondrion inner membrane</location>
        <topology evidence="2">Multi-pass membrane protein</topology>
    </subcellularLocation>
</comment>
<comment type="miscellaneous">
    <text evidence="1">Heme 1 (or BL or b562) is low-potential and absorbs at about 562 nm, and heme 2 (or BH or b566) is high-potential and absorbs at about 566 nm.</text>
</comment>
<comment type="similarity">
    <text evidence="3 4">Belongs to the cytochrome b family.</text>
</comment>
<comment type="caution">
    <text evidence="2">The full-length protein contains only eight transmembrane helices, not nine as predicted by bioinformatics tools.</text>
</comment>
<reference key="1">
    <citation type="journal article" date="2005" name="J. Mammal.">
        <title>Phylogenetics of the new world rodent family Heteromyidae.</title>
        <authorList>
            <person name="Alexander L.F."/>
            <person name="Riddle B.R."/>
        </authorList>
    </citation>
    <scope>NUCLEOTIDE SEQUENCE [GENOMIC DNA]</scope>
    <source>
        <strain>Isolate LVT 1264</strain>
    </source>
</reference>
<dbReference type="EMBL" id="AY926394">
    <property type="protein sequence ID" value="AAY23237.1"/>
    <property type="molecule type" value="Genomic_DNA"/>
</dbReference>
<dbReference type="SMR" id="Q508K9"/>
<dbReference type="GO" id="GO:0005743">
    <property type="term" value="C:mitochondrial inner membrane"/>
    <property type="evidence" value="ECO:0007669"/>
    <property type="project" value="UniProtKB-SubCell"/>
</dbReference>
<dbReference type="GO" id="GO:0045275">
    <property type="term" value="C:respiratory chain complex III"/>
    <property type="evidence" value="ECO:0007669"/>
    <property type="project" value="InterPro"/>
</dbReference>
<dbReference type="GO" id="GO:0046872">
    <property type="term" value="F:metal ion binding"/>
    <property type="evidence" value="ECO:0007669"/>
    <property type="project" value="UniProtKB-KW"/>
</dbReference>
<dbReference type="GO" id="GO:0008121">
    <property type="term" value="F:ubiquinol-cytochrome-c reductase activity"/>
    <property type="evidence" value="ECO:0007669"/>
    <property type="project" value="InterPro"/>
</dbReference>
<dbReference type="GO" id="GO:0006122">
    <property type="term" value="P:mitochondrial electron transport, ubiquinol to cytochrome c"/>
    <property type="evidence" value="ECO:0007669"/>
    <property type="project" value="TreeGrafter"/>
</dbReference>
<dbReference type="CDD" id="cd00290">
    <property type="entry name" value="cytochrome_b_C"/>
    <property type="match status" value="1"/>
</dbReference>
<dbReference type="CDD" id="cd00284">
    <property type="entry name" value="Cytochrome_b_N"/>
    <property type="match status" value="1"/>
</dbReference>
<dbReference type="FunFam" id="1.20.810.10:FF:000002">
    <property type="entry name" value="Cytochrome b"/>
    <property type="match status" value="1"/>
</dbReference>
<dbReference type="Gene3D" id="1.20.810.10">
    <property type="entry name" value="Cytochrome Bc1 Complex, Chain C"/>
    <property type="match status" value="1"/>
</dbReference>
<dbReference type="InterPro" id="IPR005798">
    <property type="entry name" value="Cyt_b/b6_C"/>
</dbReference>
<dbReference type="InterPro" id="IPR036150">
    <property type="entry name" value="Cyt_b/b6_C_sf"/>
</dbReference>
<dbReference type="InterPro" id="IPR005797">
    <property type="entry name" value="Cyt_b/b6_N"/>
</dbReference>
<dbReference type="InterPro" id="IPR027387">
    <property type="entry name" value="Cytb/b6-like_sf"/>
</dbReference>
<dbReference type="InterPro" id="IPR030689">
    <property type="entry name" value="Cytochrome_b"/>
</dbReference>
<dbReference type="InterPro" id="IPR048260">
    <property type="entry name" value="Cytochrome_b_C_euk/bac"/>
</dbReference>
<dbReference type="InterPro" id="IPR048259">
    <property type="entry name" value="Cytochrome_b_N_euk/bac"/>
</dbReference>
<dbReference type="InterPro" id="IPR016174">
    <property type="entry name" value="Di-haem_cyt_TM"/>
</dbReference>
<dbReference type="PANTHER" id="PTHR19271">
    <property type="entry name" value="CYTOCHROME B"/>
    <property type="match status" value="1"/>
</dbReference>
<dbReference type="PANTHER" id="PTHR19271:SF16">
    <property type="entry name" value="CYTOCHROME B"/>
    <property type="match status" value="1"/>
</dbReference>
<dbReference type="Pfam" id="PF00032">
    <property type="entry name" value="Cytochrom_B_C"/>
    <property type="match status" value="1"/>
</dbReference>
<dbReference type="Pfam" id="PF00033">
    <property type="entry name" value="Cytochrome_B"/>
    <property type="match status" value="1"/>
</dbReference>
<dbReference type="PIRSF" id="PIRSF038885">
    <property type="entry name" value="COB"/>
    <property type="match status" value="1"/>
</dbReference>
<dbReference type="SUPFAM" id="SSF81648">
    <property type="entry name" value="a domain/subunit of cytochrome bc1 complex (Ubiquinol-cytochrome c reductase)"/>
    <property type="match status" value="1"/>
</dbReference>
<dbReference type="SUPFAM" id="SSF81342">
    <property type="entry name" value="Transmembrane di-heme cytochromes"/>
    <property type="match status" value="1"/>
</dbReference>
<dbReference type="PROSITE" id="PS51003">
    <property type="entry name" value="CYTB_CTER"/>
    <property type="match status" value="1"/>
</dbReference>
<dbReference type="PROSITE" id="PS51002">
    <property type="entry name" value="CYTB_NTER"/>
    <property type="match status" value="1"/>
</dbReference>
<name>CYB_CHAGD</name>
<evidence type="ECO:0000250" key="1"/>
<evidence type="ECO:0000250" key="2">
    <source>
        <dbReference type="UniProtKB" id="P00157"/>
    </source>
</evidence>
<evidence type="ECO:0000255" key="3">
    <source>
        <dbReference type="PROSITE-ProRule" id="PRU00967"/>
    </source>
</evidence>
<evidence type="ECO:0000255" key="4">
    <source>
        <dbReference type="PROSITE-ProRule" id="PRU00968"/>
    </source>
</evidence>
<protein>
    <recommendedName>
        <fullName>Cytochrome b</fullName>
    </recommendedName>
    <alternativeName>
        <fullName>Complex III subunit 3</fullName>
    </alternativeName>
    <alternativeName>
        <fullName>Complex III subunit III</fullName>
    </alternativeName>
    <alternativeName>
        <fullName>Cytochrome b-c1 complex subunit 3</fullName>
    </alternativeName>
    <alternativeName>
        <fullName>Ubiquinol-cytochrome-c reductase complex cytochrome b subunit</fullName>
    </alternativeName>
</protein>
<proteinExistence type="inferred from homology"/>
<sequence>MTIIRKSHPLMKMVNHAFIDLPAPSNISSWWNFGSLLGLCLIIQIASGLFLAMHYTSDTTSAFSSVAHICRDVNYGWLIRYIHANGASLFFICLYLHIGRGIYYGSYLYKETWNIGIVLLFLTMATAFMGYVLPWGQMSFWGATVITNLLSAIPYVGTSLVEWIWGGFSVDKATLTRFFAFHFILPFIIAATAMVHLLFLHETGSNNPLGIPSNSDKIPFHPYYTFKDLLGVIILLSLFLTFVLFFPDLLGDPDNYSQANPLNTPPHIKPEWYFLFAYAILRSIPNKLGGVIALVLSILVLALFPLLHTANQRSMMFRPISQLLFWTLISDLMILTWIGGQPVEPPFIIIGQIASILYFSIILLLLPIAGLIENKILKW</sequence>
<organism>
    <name type="scientific">Chaetodipus goldmani</name>
    <name type="common">Goldman's pocket mouse</name>
    <dbReference type="NCBI Taxonomy" id="145411"/>
    <lineage>
        <taxon>Eukaryota</taxon>
        <taxon>Metazoa</taxon>
        <taxon>Chordata</taxon>
        <taxon>Craniata</taxon>
        <taxon>Vertebrata</taxon>
        <taxon>Euteleostomi</taxon>
        <taxon>Mammalia</taxon>
        <taxon>Eutheria</taxon>
        <taxon>Euarchontoglires</taxon>
        <taxon>Glires</taxon>
        <taxon>Rodentia</taxon>
        <taxon>Castorimorpha</taxon>
        <taxon>Heteromyidae</taxon>
        <taxon>Perognathinae</taxon>
        <taxon>Chaetodipus</taxon>
    </lineage>
</organism>
<keyword id="KW-0249">Electron transport</keyword>
<keyword id="KW-0349">Heme</keyword>
<keyword id="KW-0408">Iron</keyword>
<keyword id="KW-0472">Membrane</keyword>
<keyword id="KW-0479">Metal-binding</keyword>
<keyword id="KW-0496">Mitochondrion</keyword>
<keyword id="KW-0999">Mitochondrion inner membrane</keyword>
<keyword id="KW-0679">Respiratory chain</keyword>
<keyword id="KW-0812">Transmembrane</keyword>
<keyword id="KW-1133">Transmembrane helix</keyword>
<keyword id="KW-0813">Transport</keyword>
<keyword id="KW-0830">Ubiquinone</keyword>
<accession>Q508K9</accession>
<geneLocation type="mitochondrion"/>
<feature type="chain" id="PRO_0000254997" description="Cytochrome b">
    <location>
        <begin position="1"/>
        <end position="379"/>
    </location>
</feature>
<feature type="transmembrane region" description="Helical" evidence="2">
    <location>
        <begin position="33"/>
        <end position="53"/>
    </location>
</feature>
<feature type="transmembrane region" description="Helical" evidence="2">
    <location>
        <begin position="77"/>
        <end position="98"/>
    </location>
</feature>
<feature type="transmembrane region" description="Helical" evidence="2">
    <location>
        <begin position="113"/>
        <end position="133"/>
    </location>
</feature>
<feature type="transmembrane region" description="Helical" evidence="2">
    <location>
        <begin position="178"/>
        <end position="198"/>
    </location>
</feature>
<feature type="transmembrane region" description="Helical" evidence="2">
    <location>
        <begin position="226"/>
        <end position="246"/>
    </location>
</feature>
<feature type="transmembrane region" description="Helical" evidence="2">
    <location>
        <begin position="288"/>
        <end position="308"/>
    </location>
</feature>
<feature type="transmembrane region" description="Helical" evidence="2">
    <location>
        <begin position="320"/>
        <end position="340"/>
    </location>
</feature>
<feature type="transmembrane region" description="Helical" evidence="2">
    <location>
        <begin position="347"/>
        <end position="367"/>
    </location>
</feature>
<feature type="binding site" description="axial binding residue" evidence="2">
    <location>
        <position position="83"/>
    </location>
    <ligand>
        <name>heme b</name>
        <dbReference type="ChEBI" id="CHEBI:60344"/>
        <label>b562</label>
    </ligand>
    <ligandPart>
        <name>Fe</name>
        <dbReference type="ChEBI" id="CHEBI:18248"/>
    </ligandPart>
</feature>
<feature type="binding site" description="axial binding residue" evidence="2">
    <location>
        <position position="97"/>
    </location>
    <ligand>
        <name>heme b</name>
        <dbReference type="ChEBI" id="CHEBI:60344"/>
        <label>b566</label>
    </ligand>
    <ligandPart>
        <name>Fe</name>
        <dbReference type="ChEBI" id="CHEBI:18248"/>
    </ligandPart>
</feature>
<feature type="binding site" description="axial binding residue" evidence="2">
    <location>
        <position position="182"/>
    </location>
    <ligand>
        <name>heme b</name>
        <dbReference type="ChEBI" id="CHEBI:60344"/>
        <label>b562</label>
    </ligand>
    <ligandPart>
        <name>Fe</name>
        <dbReference type="ChEBI" id="CHEBI:18248"/>
    </ligandPart>
</feature>
<feature type="binding site" description="axial binding residue" evidence="2">
    <location>
        <position position="196"/>
    </location>
    <ligand>
        <name>heme b</name>
        <dbReference type="ChEBI" id="CHEBI:60344"/>
        <label>b566</label>
    </ligand>
    <ligandPart>
        <name>Fe</name>
        <dbReference type="ChEBI" id="CHEBI:18248"/>
    </ligandPart>
</feature>
<feature type="binding site" evidence="2">
    <location>
        <position position="201"/>
    </location>
    <ligand>
        <name>a ubiquinone</name>
        <dbReference type="ChEBI" id="CHEBI:16389"/>
    </ligand>
</feature>